<organism>
    <name type="scientific">Sclerotinia sclerotiorum (strain ATCC 18683 / 1980 / Ss-1)</name>
    <name type="common">White mold</name>
    <name type="synonym">Whetzelinia sclerotiorum</name>
    <dbReference type="NCBI Taxonomy" id="665079"/>
    <lineage>
        <taxon>Eukaryota</taxon>
        <taxon>Fungi</taxon>
        <taxon>Dikarya</taxon>
        <taxon>Ascomycota</taxon>
        <taxon>Pezizomycotina</taxon>
        <taxon>Leotiomycetes</taxon>
        <taxon>Helotiales</taxon>
        <taxon>Sclerotiniaceae</taxon>
        <taxon>Sclerotinia</taxon>
    </lineage>
</organism>
<gene>
    <name evidence="2" type="primary">ptf</name>
    <name type="ORF">SS1G_09465</name>
</gene>
<name>PTF_SCLS1</name>
<keyword id="KW-0637">Prenyltransferase</keyword>
<keyword id="KW-1185">Reference proteome</keyword>
<keyword id="KW-0808">Transferase</keyword>
<accession>A7EVV6</accession>
<accession>A0A1D9QLA6</accession>
<reference key="1">
    <citation type="journal article" date="2011" name="PLoS Genet.">
        <title>Genomic analysis of the necrotrophic fungal pathogens Sclerotinia sclerotiorum and Botrytis cinerea.</title>
        <authorList>
            <person name="Amselem J."/>
            <person name="Cuomo C.A."/>
            <person name="van Kan J.A.L."/>
            <person name="Viaud M."/>
            <person name="Benito E.P."/>
            <person name="Couloux A."/>
            <person name="Coutinho P.M."/>
            <person name="de Vries R.P."/>
            <person name="Dyer P.S."/>
            <person name="Fillinger S."/>
            <person name="Fournier E."/>
            <person name="Gout L."/>
            <person name="Hahn M."/>
            <person name="Kohn L."/>
            <person name="Lapalu N."/>
            <person name="Plummer K.M."/>
            <person name="Pradier J.-M."/>
            <person name="Quevillon E."/>
            <person name="Sharon A."/>
            <person name="Simon A."/>
            <person name="ten Have A."/>
            <person name="Tudzynski B."/>
            <person name="Tudzynski P."/>
            <person name="Wincker P."/>
            <person name="Andrew M."/>
            <person name="Anthouard V."/>
            <person name="Beever R.E."/>
            <person name="Beffa R."/>
            <person name="Benoit I."/>
            <person name="Bouzid O."/>
            <person name="Brault B."/>
            <person name="Chen Z."/>
            <person name="Choquer M."/>
            <person name="Collemare J."/>
            <person name="Cotton P."/>
            <person name="Danchin E.G."/>
            <person name="Da Silva C."/>
            <person name="Gautier A."/>
            <person name="Giraud C."/>
            <person name="Giraud T."/>
            <person name="Gonzalez C."/>
            <person name="Grossetete S."/>
            <person name="Gueldener U."/>
            <person name="Henrissat B."/>
            <person name="Howlett B.J."/>
            <person name="Kodira C."/>
            <person name="Kretschmer M."/>
            <person name="Lappartient A."/>
            <person name="Leroch M."/>
            <person name="Levis C."/>
            <person name="Mauceli E."/>
            <person name="Neuveglise C."/>
            <person name="Oeser B."/>
            <person name="Pearson M."/>
            <person name="Poulain J."/>
            <person name="Poussereau N."/>
            <person name="Quesneville H."/>
            <person name="Rascle C."/>
            <person name="Schumacher J."/>
            <person name="Segurens B."/>
            <person name="Sexton A."/>
            <person name="Silva E."/>
            <person name="Sirven C."/>
            <person name="Soanes D.M."/>
            <person name="Talbot N.J."/>
            <person name="Templeton M."/>
            <person name="Yandava C."/>
            <person name="Yarden O."/>
            <person name="Zeng Q."/>
            <person name="Rollins J.A."/>
            <person name="Lebrun M.-H."/>
            <person name="Dickman M."/>
        </authorList>
    </citation>
    <scope>NUCLEOTIDE SEQUENCE [LARGE SCALE GENOMIC DNA]</scope>
    <source>
        <strain>ATCC 18683 / 1980 / Ss-1</strain>
    </source>
</reference>
<reference key="2">
    <citation type="journal article" date="2017" name="Genome Biol. Evol.">
        <title>The complete genome sequence of the phytopathogenic fungus Sclerotinia sclerotiorum reveals insights into the genome architecture of broad host range pathogens.</title>
        <authorList>
            <person name="Derbyshire M."/>
            <person name="Denton-Giles M."/>
            <person name="Hegedus D."/>
            <person name="Seifbarghy S."/>
            <person name="Rollins J."/>
            <person name="van Kan J."/>
            <person name="Seidl M.F."/>
            <person name="Faino L."/>
            <person name="Mbengue M."/>
            <person name="Navaud O."/>
            <person name="Raffaele S."/>
            <person name="Hammond-Kosack K."/>
            <person name="Heard S."/>
            <person name="Oliver R."/>
        </authorList>
    </citation>
    <scope>NUCLEOTIDE SEQUENCE [LARGE SCALE GENOMIC DNA]</scope>
    <source>
        <strain>ATCC 18683 / 1980 / Ss-1</strain>
    </source>
</reference>
<reference key="3">
    <citation type="journal article" date="2010" name="J. Biol. Chem.">
        <title>A new group of aromatic prenyltransferases in fungi, catalyzing a 2,7-dihydroxynaphthalene 3-dimethylallyl-transferase reaction.</title>
        <authorList>
            <person name="Haug-Schifferdecker E."/>
            <person name="Arican D."/>
            <person name="Brueckner R."/>
            <person name="Heide L."/>
        </authorList>
    </citation>
    <scope>FUNCTION</scope>
    <scope>CATALYTIC ACTIVITY</scope>
    <scope>BIOPHYSICOCHEMICAL PROPERTIES</scope>
    <scope>SUBSTRATE SPECIFICITY</scope>
</reference>
<dbReference type="EC" id="2.5.1.-" evidence="1"/>
<dbReference type="EMBL" id="CH476633">
    <property type="protein sequence ID" value="EDN93598.1"/>
    <property type="molecule type" value="Genomic_DNA"/>
</dbReference>
<dbReference type="EMBL" id="CP017828">
    <property type="protein sequence ID" value="APA15717.1"/>
    <property type="molecule type" value="Genomic_DNA"/>
</dbReference>
<dbReference type="RefSeq" id="XP_001589743.1">
    <property type="nucleotide sequence ID" value="XM_001589693.1"/>
</dbReference>
<dbReference type="SMR" id="A7EVV6"/>
<dbReference type="EnsemblFungi" id="EDN93598">
    <property type="protein sequence ID" value="EDN93598"/>
    <property type="gene ID" value="SS1G_09465"/>
</dbReference>
<dbReference type="GeneID" id="5485694"/>
<dbReference type="KEGG" id="ssl:SS1G_09465"/>
<dbReference type="VEuPathDB" id="FungiDB:sscle_15g104870"/>
<dbReference type="eggNOG" id="ENOG502SMTG">
    <property type="taxonomic scope" value="Eukaryota"/>
</dbReference>
<dbReference type="HOGENOM" id="CLU_057184_0_0_1"/>
<dbReference type="InParanoid" id="A7EVV6"/>
<dbReference type="OMA" id="ALNYRFY"/>
<dbReference type="OrthoDB" id="3913316at2759"/>
<dbReference type="Proteomes" id="UP000001312">
    <property type="component" value="Unassembled WGS sequence"/>
</dbReference>
<dbReference type="Proteomes" id="UP000177798">
    <property type="component" value="Chromosome 15"/>
</dbReference>
<dbReference type="GO" id="GO:0004659">
    <property type="term" value="F:prenyltransferase activity"/>
    <property type="evidence" value="ECO:0007669"/>
    <property type="project" value="UniProtKB-KW"/>
</dbReference>
<dbReference type="CDD" id="cd13931">
    <property type="entry name" value="PT-CloQ_NphB"/>
    <property type="match status" value="1"/>
</dbReference>
<dbReference type="InterPro" id="IPR033964">
    <property type="entry name" value="Aro_prenylTrfase"/>
</dbReference>
<dbReference type="InterPro" id="IPR020965">
    <property type="entry name" value="Prenyltransferase_CloQ"/>
</dbReference>
<dbReference type="InterPro" id="IPR036239">
    <property type="entry name" value="PrenylTrfase-like_sf"/>
</dbReference>
<dbReference type="Pfam" id="PF11468">
    <property type="entry name" value="PTase_Orf2"/>
    <property type="match status" value="1"/>
</dbReference>
<dbReference type="SFLD" id="SFLDS00036">
    <property type="entry name" value="Aromatic_Prenyltransferase"/>
    <property type="match status" value="1"/>
</dbReference>
<dbReference type="SFLD" id="SFLDG01163">
    <property type="entry name" value="II"/>
    <property type="match status" value="1"/>
</dbReference>
<dbReference type="SUPFAM" id="SSF143492">
    <property type="entry name" value="Prenyltransferase-like"/>
    <property type="match status" value="1"/>
</dbReference>
<sequence length="309" mass="34721">MVVQLISKPSKFSQSRFLDDIRNLSAAINAPYSERTTIEALSVYSHSFHNGVVLWRVTDRPGDALNYRFYSREPIDTVSIAASAGLLSPDIANTLGKLVTSWSSLYDGTPEESCDFDAEKGLVKAWVYFGGMRPLDDILGAEGVPESVRQHEKRFKELGLQKVRHVAVDYHKQTVNLYFRAQGPISFQQATAFNALAGAEPPSQSQFIEMREFLNAVGYTFAVTINIDSGDIERVGYYALKLPERSAKKWPAINAQLERFVQFAPSYDREEMNAVAWSFGERKTYVKFERSYCGELIPLIKGWGTTLSS</sequence>
<protein>
    <recommendedName>
        <fullName evidence="2">Aromatic prenyltransferase</fullName>
        <ecNumber evidence="1">2.5.1.-</ecNumber>
    </recommendedName>
</protein>
<evidence type="ECO:0000269" key="1">
    <source>
    </source>
</evidence>
<evidence type="ECO:0000303" key="2">
    <source>
    </source>
</evidence>
<evidence type="ECO:0000305" key="3"/>
<feature type="chain" id="PRO_0000455463" description="Aromatic prenyltransferase">
    <location>
        <begin position="1"/>
        <end position="309"/>
    </location>
</feature>
<comment type="function">
    <text evidence="1">Prenyltransferase that attaches isoprenoid moieties to carbon atoms of aromatic substrates in an enzyme-catalyzed Friedel-Crafts reaction (PubMed:20351110). Shows specificity for dimethylallyl diphosphate (DMAPP) and does not accept geranyl diphosphate (GPP) or isopentenyl diphosphate (IPP) (PubMed:20351110). Prenylates the artificial substrate 2,7-dihydroxynaphthalene (2,7-DHN), as well as dihydrophenazine-1-carboxylic acid and 4-hydroxybenzoic acid at lower levels (PubMed:20351110). Only traces of products are detected with aspulvinone E or flaviolin as substrates; and no product is formed with L-tryptophan, L-tyrosine, or 4-hydroxyphenylpyruvate (PubMed:20351110). Ptf seems no to be involved in the prenylation reaction in the biosynthesis of aspulvinone H and J and the physiological function of ptf remains unknown (PubMed:20351110).</text>
</comment>
<comment type="biophysicochemical properties">
    <kinetics>
        <KM evidence="1">1232 uM for DMAPP</KM>
        <KM evidence="1">590 uM for 2,7-dihydroxynaphthalene</KM>
    </kinetics>
</comment>
<comment type="miscellaneous">
    <text evidence="1">The gene is not located within a recognizable secondary metabolic gene cluster.</text>
</comment>
<comment type="similarity">
    <text evidence="3">Belongs to the aromatic prenyltransferase family.</text>
</comment>
<proteinExistence type="evidence at protein level"/>